<name>BMNH4_BOMVA</name>
<keyword id="KW-0027">Amidation</keyword>
<keyword id="KW-0878">Amphibian defense peptide</keyword>
<keyword id="KW-0044">Antibiotic</keyword>
<keyword id="KW-0929">Antimicrobial</keyword>
<keyword id="KW-0204">Cytolysis</keyword>
<keyword id="KW-0208">D-amino acid</keyword>
<keyword id="KW-0903">Direct protein sequencing</keyword>
<keyword id="KW-0354">Hemolysis</keyword>
<keyword id="KW-0964">Secreted</keyword>
<comment type="function">
    <text>Has antimicrobial and hemolytic activities.</text>
</comment>
<comment type="subcellular location">
    <subcellularLocation>
        <location>Secreted</location>
    </subcellularLocation>
</comment>
<comment type="tissue specificity">
    <text>Expressed by the skin glands.</text>
</comment>
<comment type="similarity">
    <text evidence="2">Belongs to the bombinin family.</text>
</comment>
<sequence length="21" mass="1975">LIGPVLGLVGSALGGLLKKIG</sequence>
<organism>
    <name type="scientific">Bombina variegata</name>
    <name type="common">Yellow-bellied toad</name>
    <dbReference type="NCBI Taxonomy" id="8348"/>
    <lineage>
        <taxon>Eukaryota</taxon>
        <taxon>Metazoa</taxon>
        <taxon>Chordata</taxon>
        <taxon>Craniata</taxon>
        <taxon>Vertebrata</taxon>
        <taxon>Euteleostomi</taxon>
        <taxon>Amphibia</taxon>
        <taxon>Batrachia</taxon>
        <taxon>Anura</taxon>
        <taxon>Bombinatoridae</taxon>
        <taxon>Bombina</taxon>
    </lineage>
</organism>
<proteinExistence type="evidence at protein level"/>
<protein>
    <recommendedName>
        <fullName>Bombinin-H4</fullName>
    </recommendedName>
</protein>
<evidence type="ECO:0000269" key="1">
    <source>
    </source>
</evidence>
<evidence type="ECO:0000305" key="2"/>
<dbReference type="BMRB" id="P82284"/>
<dbReference type="GO" id="GO:0005576">
    <property type="term" value="C:extracellular region"/>
    <property type="evidence" value="ECO:0007669"/>
    <property type="project" value="UniProtKB-SubCell"/>
</dbReference>
<dbReference type="GO" id="GO:0042742">
    <property type="term" value="P:defense response to bacterium"/>
    <property type="evidence" value="ECO:0007669"/>
    <property type="project" value="UniProtKB-KW"/>
</dbReference>
<dbReference type="GO" id="GO:0031640">
    <property type="term" value="P:killing of cells of another organism"/>
    <property type="evidence" value="ECO:0007669"/>
    <property type="project" value="UniProtKB-KW"/>
</dbReference>
<feature type="peptide" id="PRO_0000003078" description="Bombinin-H4">
    <location>
        <begin position="1"/>
        <end position="20"/>
    </location>
</feature>
<feature type="modified residue" description="D-allo-isoleucine" evidence="1">
    <location>
        <position position="2"/>
    </location>
</feature>
<feature type="modified residue" description="Isoleucine amide" evidence="1">
    <location>
        <position position="20"/>
    </location>
</feature>
<reference key="1">
    <citation type="journal article" date="1993" name="EMBO J.">
        <title>Antibacterial and haemolytic peptides containing D-alloisoleucine from the skin of Bombina variegata.</title>
        <authorList>
            <person name="Mignogna G."/>
            <person name="Simmaco M."/>
            <person name="Kreil G."/>
            <person name="Barra D."/>
        </authorList>
    </citation>
    <scope>PROTEIN SEQUENCE</scope>
    <scope>D-AMINO ACID AT ILE-2</scope>
    <scope>AMIDATION AT ILE-20</scope>
    <source>
        <tissue>Skin secretion</tissue>
    </source>
</reference>
<accession>P82284</accession>